<dbReference type="EC" id="2.7.1.148" evidence="1"/>
<dbReference type="EMBL" id="CP000027">
    <property type="protein sequence ID" value="AAW40288.1"/>
    <property type="molecule type" value="Genomic_DNA"/>
</dbReference>
<dbReference type="RefSeq" id="WP_010936183.1">
    <property type="nucleotide sequence ID" value="NC_002936.3"/>
</dbReference>
<dbReference type="SMR" id="Q3Z9E9"/>
<dbReference type="FunCoup" id="Q3Z9E9">
    <property type="interactions" value="319"/>
</dbReference>
<dbReference type="STRING" id="243164.DET0405"/>
<dbReference type="GeneID" id="3230252"/>
<dbReference type="KEGG" id="det:DET0405"/>
<dbReference type="PATRIC" id="fig|243164.10.peg.384"/>
<dbReference type="eggNOG" id="COG1947">
    <property type="taxonomic scope" value="Bacteria"/>
</dbReference>
<dbReference type="HOGENOM" id="CLU_053057_1_1_0"/>
<dbReference type="InParanoid" id="Q3Z9E9"/>
<dbReference type="UniPathway" id="UPA00056">
    <property type="reaction ID" value="UER00094"/>
</dbReference>
<dbReference type="Proteomes" id="UP000008289">
    <property type="component" value="Chromosome"/>
</dbReference>
<dbReference type="GO" id="GO:0050515">
    <property type="term" value="F:4-(cytidine 5'-diphospho)-2-C-methyl-D-erythritol kinase activity"/>
    <property type="evidence" value="ECO:0007669"/>
    <property type="project" value="UniProtKB-UniRule"/>
</dbReference>
<dbReference type="GO" id="GO:0005524">
    <property type="term" value="F:ATP binding"/>
    <property type="evidence" value="ECO:0007669"/>
    <property type="project" value="UniProtKB-UniRule"/>
</dbReference>
<dbReference type="GO" id="GO:0019288">
    <property type="term" value="P:isopentenyl diphosphate biosynthetic process, methylerythritol 4-phosphate pathway"/>
    <property type="evidence" value="ECO:0007669"/>
    <property type="project" value="UniProtKB-UniRule"/>
</dbReference>
<dbReference type="GO" id="GO:0016114">
    <property type="term" value="P:terpenoid biosynthetic process"/>
    <property type="evidence" value="ECO:0007669"/>
    <property type="project" value="InterPro"/>
</dbReference>
<dbReference type="Gene3D" id="3.30.230.10">
    <property type="match status" value="1"/>
</dbReference>
<dbReference type="Gene3D" id="3.30.70.890">
    <property type="entry name" value="GHMP kinase, C-terminal domain"/>
    <property type="match status" value="1"/>
</dbReference>
<dbReference type="HAMAP" id="MF_00061">
    <property type="entry name" value="IspE"/>
    <property type="match status" value="1"/>
</dbReference>
<dbReference type="InterPro" id="IPR013750">
    <property type="entry name" value="GHMP_kinase_C_dom"/>
</dbReference>
<dbReference type="InterPro" id="IPR036554">
    <property type="entry name" value="GHMP_kinase_C_sf"/>
</dbReference>
<dbReference type="InterPro" id="IPR006204">
    <property type="entry name" value="GHMP_kinase_N_dom"/>
</dbReference>
<dbReference type="InterPro" id="IPR004424">
    <property type="entry name" value="IspE"/>
</dbReference>
<dbReference type="InterPro" id="IPR020568">
    <property type="entry name" value="Ribosomal_Su5_D2-typ_SF"/>
</dbReference>
<dbReference type="InterPro" id="IPR014721">
    <property type="entry name" value="Ribsml_uS5_D2-typ_fold_subgr"/>
</dbReference>
<dbReference type="NCBIfam" id="TIGR00154">
    <property type="entry name" value="ispE"/>
    <property type="match status" value="1"/>
</dbReference>
<dbReference type="PANTHER" id="PTHR43527">
    <property type="entry name" value="4-DIPHOSPHOCYTIDYL-2-C-METHYL-D-ERYTHRITOL KINASE, CHLOROPLASTIC"/>
    <property type="match status" value="1"/>
</dbReference>
<dbReference type="PANTHER" id="PTHR43527:SF2">
    <property type="entry name" value="4-DIPHOSPHOCYTIDYL-2-C-METHYL-D-ERYTHRITOL KINASE, CHLOROPLASTIC"/>
    <property type="match status" value="1"/>
</dbReference>
<dbReference type="Pfam" id="PF08544">
    <property type="entry name" value="GHMP_kinases_C"/>
    <property type="match status" value="1"/>
</dbReference>
<dbReference type="Pfam" id="PF00288">
    <property type="entry name" value="GHMP_kinases_N"/>
    <property type="match status" value="1"/>
</dbReference>
<dbReference type="PIRSF" id="PIRSF010376">
    <property type="entry name" value="IspE"/>
    <property type="match status" value="1"/>
</dbReference>
<dbReference type="SUPFAM" id="SSF55060">
    <property type="entry name" value="GHMP Kinase, C-terminal domain"/>
    <property type="match status" value="1"/>
</dbReference>
<dbReference type="SUPFAM" id="SSF54211">
    <property type="entry name" value="Ribosomal protein S5 domain 2-like"/>
    <property type="match status" value="1"/>
</dbReference>
<evidence type="ECO:0000255" key="1">
    <source>
        <dbReference type="HAMAP-Rule" id="MF_00061"/>
    </source>
</evidence>
<comment type="function">
    <text evidence="1">Catalyzes the phosphorylation of the position 2 hydroxy group of 4-diphosphocytidyl-2C-methyl-D-erythritol.</text>
</comment>
<comment type="catalytic activity">
    <reaction evidence="1">
        <text>4-CDP-2-C-methyl-D-erythritol + ATP = 4-CDP-2-C-methyl-D-erythritol 2-phosphate + ADP + H(+)</text>
        <dbReference type="Rhea" id="RHEA:18437"/>
        <dbReference type="ChEBI" id="CHEBI:15378"/>
        <dbReference type="ChEBI" id="CHEBI:30616"/>
        <dbReference type="ChEBI" id="CHEBI:57823"/>
        <dbReference type="ChEBI" id="CHEBI:57919"/>
        <dbReference type="ChEBI" id="CHEBI:456216"/>
        <dbReference type="EC" id="2.7.1.148"/>
    </reaction>
</comment>
<comment type="pathway">
    <text evidence="1">Isoprenoid biosynthesis; isopentenyl diphosphate biosynthesis via DXP pathway; isopentenyl diphosphate from 1-deoxy-D-xylulose 5-phosphate: step 3/6.</text>
</comment>
<comment type="similarity">
    <text evidence="1">Belongs to the GHMP kinase family. IspE subfamily.</text>
</comment>
<name>ISPE_DEHM1</name>
<organism>
    <name type="scientific">Dehalococcoides mccartyi (strain ATCC BAA-2266 / KCTC 15142 / 195)</name>
    <name type="common">Dehalococcoides ethenogenes (strain 195)</name>
    <dbReference type="NCBI Taxonomy" id="243164"/>
    <lineage>
        <taxon>Bacteria</taxon>
        <taxon>Bacillati</taxon>
        <taxon>Chloroflexota</taxon>
        <taxon>Dehalococcoidia</taxon>
        <taxon>Dehalococcoidales</taxon>
        <taxon>Dehalococcoidaceae</taxon>
        <taxon>Dehalococcoides</taxon>
    </lineage>
</organism>
<protein>
    <recommendedName>
        <fullName evidence="1">4-diphosphocytidyl-2-C-methyl-D-erythritol kinase</fullName>
        <shortName evidence="1">CMK</shortName>
        <ecNumber evidence="1">2.7.1.148</ecNumber>
    </recommendedName>
    <alternativeName>
        <fullName evidence="1">4-(cytidine-5'-diphospho)-2-C-methyl-D-erythritol kinase</fullName>
    </alternativeName>
</protein>
<sequence>MLTLLAPAKVNLSLEVLYRRNDGYHELRSIIQSLSLCDRLSFSPAKTVQISSDSPDWQAEHSLVSKAVALFSEKCGQGRGVNLTIAKRIPLVSGLGGDSSCAAAVLKGLNKLWGCGYPRWRLMELGAELGSDVPFFMMGGTAMMEGRGETVTPLPTLNQMWAVLLVPEIEMPPDKTAALYRNLHADSFSSGEISDKLLEDICQGKLSYSSCFNVFEKIAFTLFPDLAKYRWQFLEAGAYQIFLAGAGPTLFTLLKDKNMAEKIYHNLCQKGHQAYLVSTLGPLD</sequence>
<accession>Q3Z9E9</accession>
<reference key="1">
    <citation type="journal article" date="2005" name="Science">
        <title>Genome sequence of the PCE-dechlorinating bacterium Dehalococcoides ethenogenes.</title>
        <authorList>
            <person name="Seshadri R."/>
            <person name="Adrian L."/>
            <person name="Fouts D.E."/>
            <person name="Eisen J.A."/>
            <person name="Phillippy A.M."/>
            <person name="Methe B.A."/>
            <person name="Ward N.L."/>
            <person name="Nelson W.C."/>
            <person name="DeBoy R.T."/>
            <person name="Khouri H.M."/>
            <person name="Kolonay J.F."/>
            <person name="Dodson R.J."/>
            <person name="Daugherty S.C."/>
            <person name="Brinkac L.M."/>
            <person name="Sullivan S.A."/>
            <person name="Madupu R."/>
            <person name="Nelson K.E."/>
            <person name="Kang K.H."/>
            <person name="Impraim M."/>
            <person name="Tran K."/>
            <person name="Robinson J.M."/>
            <person name="Forberger H.A."/>
            <person name="Fraser C.M."/>
            <person name="Zinder S.H."/>
            <person name="Heidelberg J.F."/>
        </authorList>
    </citation>
    <scope>NUCLEOTIDE SEQUENCE [LARGE SCALE GENOMIC DNA]</scope>
    <source>
        <strain>ATCC BAA-2266 / KCTC 15142 / 195</strain>
    </source>
</reference>
<keyword id="KW-0067">ATP-binding</keyword>
<keyword id="KW-0414">Isoprene biosynthesis</keyword>
<keyword id="KW-0418">Kinase</keyword>
<keyword id="KW-0547">Nucleotide-binding</keyword>
<keyword id="KW-0808">Transferase</keyword>
<proteinExistence type="inferred from homology"/>
<gene>
    <name evidence="1" type="primary">ispE</name>
    <name type="ordered locus">DET0405</name>
</gene>
<feature type="chain" id="PRO_0000235085" description="4-diphosphocytidyl-2-C-methyl-D-erythritol kinase">
    <location>
        <begin position="1"/>
        <end position="284"/>
    </location>
</feature>
<feature type="active site" evidence="1">
    <location>
        <position position="9"/>
    </location>
</feature>
<feature type="active site" evidence="1">
    <location>
        <position position="132"/>
    </location>
</feature>
<feature type="binding site" evidence="1">
    <location>
        <begin position="90"/>
        <end position="100"/>
    </location>
    <ligand>
        <name>ATP</name>
        <dbReference type="ChEBI" id="CHEBI:30616"/>
    </ligand>
</feature>